<organism>
    <name type="scientific">Homo sapiens</name>
    <name type="common">Human</name>
    <dbReference type="NCBI Taxonomy" id="9606"/>
    <lineage>
        <taxon>Eukaryota</taxon>
        <taxon>Metazoa</taxon>
        <taxon>Chordata</taxon>
        <taxon>Craniata</taxon>
        <taxon>Vertebrata</taxon>
        <taxon>Euteleostomi</taxon>
        <taxon>Mammalia</taxon>
        <taxon>Eutheria</taxon>
        <taxon>Euarchontoglires</taxon>
        <taxon>Primates</taxon>
        <taxon>Haplorrhini</taxon>
        <taxon>Catarrhini</taxon>
        <taxon>Hominidae</taxon>
        <taxon>Homo</taxon>
    </lineage>
</organism>
<name>PKHS1_HUMAN</name>
<protein>
    <recommendedName>
        <fullName evidence="3">Pleckstrin homology domain-containing family S member 1</fullName>
        <shortName>PH domain-containing family S member 1</shortName>
    </recommendedName>
    <alternativeName>
        <fullName>Epididymis luminal protein 185</fullName>
        <shortName>hEL185</shortName>
    </alternativeName>
</protein>
<proteinExistence type="evidence at protein level"/>
<accession>Q5SXH7</accession>
<accession>A0A8Q3WKA6</accession>
<accession>A8KA02</accession>
<accession>B3KX00</accession>
<accession>B6EDE1</accession>
<accession>Q5SXH8</accession>
<accession>Q5SXI0</accession>
<accession>Q6ZQR5</accession>
<accession>Q8NE42</accession>
<accession>Q9H5D9</accession>
<keyword id="KW-0025">Alternative splicing</keyword>
<keyword id="KW-1267">Proteomics identification</keyword>
<keyword id="KW-1185">Reference proteome</keyword>
<evidence type="ECO:0000255" key="1">
    <source>
        <dbReference type="PROSITE-ProRule" id="PRU00145"/>
    </source>
</evidence>
<evidence type="ECO:0000256" key="2">
    <source>
        <dbReference type="SAM" id="MobiDB-lite"/>
    </source>
</evidence>
<evidence type="ECO:0000305" key="3"/>
<evidence type="ECO:0000312" key="4">
    <source>
        <dbReference type="HGNC" id="HGNC:26285"/>
    </source>
</evidence>
<sequence>MAGGKQFTFSYENEVCKQDYFIKSPPSQLFSSVTSWKKRFFILSKAGEKSFSLSYYKDHHHRGSIEIDQNSSVEVGISSQEKMQSVQKMFKCHPDEVMSIRTTNREYFLIGHDREKIKDWVSFMSSFRQDIKATQQNTEEELSLGNKRTLFYSSPLLGPSSTSEAVGSSSPRNGLQDKHLMEQSSPGFRQTHLQDLSEATQDVKEENHYLTPRSVLLELDNIIASSDSGESIETDGPDQVSGRIECHYEPMESYFFKETSHESVDSSKEEPQTLPETQDGDLHLQEQGSGIDWCLSPADVEAQTTNDQKGNIPDESQVEKLNVFLSPPDVINYLALTEATGRICVSQWEGPPRLGCIFCHGDHLLAVNDLKPQSLEEVSLFLTRSIQKEDSFRILSYQVAFGEGTELRDRAPGFRTSDRHDVAKRACMESDWCRDSKTAPSTNLCLSFLFCKIMTNDGAGCWIIK</sequence>
<comment type="interaction">
    <interactant intactId="EBI-10691507">
        <id>Q5SXH7</id>
    </interactant>
    <interactant intactId="EBI-750589">
        <id>P30039</id>
        <label>PBLD</label>
    </interactant>
    <organismsDiffer>false</organismsDiffer>
    <experiments>2</experiments>
</comment>
<comment type="interaction">
    <interactant intactId="EBI-26412802">
        <id>Q5SXH7-1</id>
    </interactant>
    <interactant intactId="EBI-25837549">
        <id>P28329-3</id>
        <label>CHAT</label>
    </interactant>
    <organismsDiffer>false</organismsDiffer>
    <experiments>3</experiments>
</comment>
<comment type="interaction">
    <interactant intactId="EBI-26412802">
        <id>Q5SXH7-1</id>
    </interactant>
    <interactant intactId="EBI-25852368">
        <id>O75460-2</id>
        <label>ERN1</label>
    </interactant>
    <organismsDiffer>false</organismsDiffer>
    <experiments>3</experiments>
</comment>
<comment type="interaction">
    <interactant intactId="EBI-26412802">
        <id>Q5SXH7-1</id>
    </interactant>
    <interactant intactId="EBI-348399">
        <id>P22607</id>
        <label>FGFR3</label>
    </interactant>
    <organismsDiffer>false</organismsDiffer>
    <experiments>3</experiments>
</comment>
<comment type="interaction">
    <interactant intactId="EBI-26412802">
        <id>Q5SXH7-1</id>
    </interactant>
    <interactant intactId="EBI-10226858">
        <id>Q0VDC6</id>
        <label>FKBP1A</label>
    </interactant>
    <organismsDiffer>false</organismsDiffer>
    <experiments>3</experiments>
</comment>
<comment type="interaction">
    <interactant intactId="EBI-26412802">
        <id>Q5SXH7-1</id>
    </interactant>
    <interactant intactId="EBI-401755">
        <id>P62993</id>
        <label>GRB2</label>
    </interactant>
    <organismsDiffer>false</organismsDiffer>
    <experiments>2</experiments>
</comment>
<comment type="interaction">
    <interactant intactId="EBI-26412802">
        <id>Q5SXH7-1</id>
    </interactant>
    <interactant intactId="EBI-8285963">
        <id>Q14957</id>
        <label>GRIN2C</label>
    </interactant>
    <organismsDiffer>false</organismsDiffer>
    <experiments>3</experiments>
</comment>
<comment type="interaction">
    <interactant intactId="EBI-26412802">
        <id>Q5SXH7-1</id>
    </interactant>
    <interactant intactId="EBI-351506">
        <id>P06396</id>
        <label>GSN</label>
    </interactant>
    <organismsDiffer>false</organismsDiffer>
    <experiments>3</experiments>
</comment>
<comment type="interaction">
    <interactant intactId="EBI-26412802">
        <id>Q5SXH7-1</id>
    </interactant>
    <interactant intactId="EBI-356991">
        <id>P54652</id>
        <label>HSPA2</label>
    </interactant>
    <organismsDiffer>false</organismsDiffer>
    <experiments>3</experiments>
</comment>
<comment type="interaction">
    <interactant intactId="EBI-26412802">
        <id>Q5SXH7-1</id>
    </interactant>
    <interactant intactId="EBI-740195">
        <id>Q9BUL8</id>
        <label>PDCD10</label>
    </interactant>
    <organismsDiffer>false</organismsDiffer>
    <experiments>3</experiments>
</comment>
<comment type="interaction">
    <interactant intactId="EBI-26412802">
        <id>Q5SXH7-1</id>
    </interactant>
    <interactant intactId="EBI-79893">
        <id>Q92569</id>
        <label>PIK3R3</label>
    </interactant>
    <organismsDiffer>false</organismsDiffer>
    <experiments>4</experiments>
</comment>
<comment type="interaction">
    <interactant intactId="EBI-26412802">
        <id>Q5SXH7-1</id>
    </interactant>
    <interactant intactId="EBI-2555179">
        <id>Q9NUJ3</id>
        <label>TCP11L1</label>
    </interactant>
    <organismsDiffer>false</organismsDiffer>
    <experiments>3</experiments>
</comment>
<comment type="interaction">
    <interactant intactId="EBI-26412802">
        <id>Q5SXH7-1</id>
    </interactant>
    <interactant intactId="EBI-741480">
        <id>Q9UMX0</id>
        <label>UBQLN1</label>
    </interactant>
    <organismsDiffer>false</organismsDiffer>
    <experiments>3</experiments>
</comment>
<comment type="alternative products">
    <event type="alternative splicing"/>
    <isoform>
        <id>Q5SXH7-5</id>
        <name>5</name>
        <sequence type="displayed"/>
    </isoform>
    <isoform>
        <id>Q5SXH7-1</id>
        <name>1</name>
        <sequence type="described" ref="VSP_060738 VSP_060741 VSP_060742"/>
    </isoform>
    <isoform>
        <id>Q5SXH7-2</id>
        <name>2</name>
        <sequence type="described" ref="VSP_060740"/>
    </isoform>
    <isoform>
        <id>Q5SXH7-3</id>
        <name>3</name>
        <sequence type="described" ref="VSP_060736 VSP_060741 VSP_060742"/>
    </isoform>
    <isoform>
        <id>Q5SXH7-4</id>
        <name>4</name>
        <sequence type="described" ref="VSP_060737 VSP_060738 VSP_060739"/>
    </isoform>
    <isoform>
        <id>Q5SXH7-6</id>
        <name>6</name>
        <sequence type="described" ref="VSP_060737 VSP_060738 VSP_060741 VSP_060742"/>
    </isoform>
</comment>
<comment type="sequence caution" evidence="3">
    <conflict type="erroneous initiation">
        <sequence resource="EMBL-CDS" id="AAH36365"/>
    </conflict>
    <text>Extended N-terminus.</text>
</comment>
<comment type="sequence caution" evidence="3">
    <conflict type="erroneous initiation">
        <sequence resource="EMBL-CDS" id="BAB15687"/>
    </conflict>
    <text>Truncated N-terminus.</text>
</comment>
<feature type="chain" id="PRO_0000320675" description="Pleckstrin homology domain-containing family S member 1">
    <location>
        <begin position="1"/>
        <end position="465"/>
    </location>
</feature>
<feature type="domain" description="PH" evidence="1">
    <location>
        <begin position="14"/>
        <end position="129"/>
    </location>
</feature>
<feature type="region of interest" description="Disordered" evidence="2">
    <location>
        <begin position="159"/>
        <end position="179"/>
    </location>
</feature>
<feature type="region of interest" description="Disordered" evidence="2">
    <location>
        <begin position="258"/>
        <end position="283"/>
    </location>
</feature>
<feature type="compositionally biased region" description="Polar residues" evidence="2">
    <location>
        <begin position="159"/>
        <end position="173"/>
    </location>
</feature>
<feature type="compositionally biased region" description="Basic and acidic residues" evidence="2">
    <location>
        <begin position="258"/>
        <end position="271"/>
    </location>
</feature>
<feature type="splice variant" id="VSP_060736" description="In isoform 3.">
    <location>
        <begin position="1"/>
        <end position="82"/>
    </location>
</feature>
<feature type="splice variant" id="VSP_060737" description="In isoform 4 and isoform 6.">
    <original>MAG</original>
    <variation>MEPKPQKSP</variation>
    <location>
        <begin position="1"/>
        <end position="3"/>
    </location>
</feature>
<feature type="splice variant" id="VSP_060738" description="In isoform 4, isoform 1 and isoform 6.">
    <original>G</original>
    <variation>GSASLTVVQLSILIN</variation>
    <location>
        <position position="310"/>
    </location>
</feature>
<feature type="splice variant" id="VSP_060739" description="In isoform 4.">
    <location>
        <begin position="344"/>
        <end position="465"/>
    </location>
</feature>
<feature type="splice variant" id="VSP_060740" description="In isoform 2.">
    <original>DSFRILSYQVAFGEGTELRDRAPGFRTSDRHDVAKRACMESDWCRDSKTAPSTNLCLSFLFCKIMTNDGAGCWIIK</original>
    <variation>KLKLTIGRIPNSETFHAASCMCPSKCQSAAPSQLDKPRLNRAPKRSPAIKKSQQKGARE</variation>
    <location>
        <begin position="390"/>
        <end position="465"/>
    </location>
</feature>
<feature type="splice variant" id="VSP_060741" description="In isoform 3, isoform 1 and isoform 6.">
    <original>DSFRILSYQVAFGEGTELRDRAPGFRTSDRHDVAKRACMESDWCRDSKTAPSTNLCLSF</original>
    <variation>KLKLTIGRIPNSETFHAASCMCPSKCQSAAPSQLDKPRLNRAPKRSPAIKKSQQKGARE</variation>
    <location>
        <begin position="390"/>
        <end position="448"/>
    </location>
</feature>
<feature type="splice variant" id="VSP_060742" description="In isoform 3, isoform 1 and isoform 6.">
    <location>
        <begin position="449"/>
        <end position="465"/>
    </location>
</feature>
<feature type="sequence variant" id="VAR_039275" description="In dbSNP:rs34024791.">
    <original>V</original>
    <variation>I</variation>
    <location>
        <position position="323"/>
    </location>
</feature>
<feature type="sequence conflict" description="In Ref. 4; AAH36365." evidence="3" ref="4">
    <original>P</original>
    <variation>R</variation>
    <location>
        <position position="352"/>
    </location>
</feature>
<dbReference type="EMBL" id="FJ236306">
    <property type="protein sequence ID" value="ACI45238.1"/>
    <property type="molecule type" value="mRNA"/>
</dbReference>
<dbReference type="EMBL" id="AK027190">
    <property type="protein sequence ID" value="BAB15687.1"/>
    <property type="status" value="ALT_INIT"/>
    <property type="molecule type" value="mRNA"/>
</dbReference>
<dbReference type="EMBL" id="AK126354">
    <property type="protein sequence ID" value="BAG54312.1"/>
    <property type="molecule type" value="mRNA"/>
</dbReference>
<dbReference type="EMBL" id="AK128811">
    <property type="protein sequence ID" value="BAC87618.1"/>
    <property type="molecule type" value="mRNA"/>
</dbReference>
<dbReference type="EMBL" id="AK292867">
    <property type="protein sequence ID" value="BAF85556.1"/>
    <property type="molecule type" value="mRNA"/>
</dbReference>
<dbReference type="EMBL" id="AL592546">
    <property type="status" value="NOT_ANNOTATED_CDS"/>
    <property type="molecule type" value="Genomic_DNA"/>
</dbReference>
<dbReference type="EMBL" id="BC036365">
    <property type="protein sequence ID" value="AAH36365.2"/>
    <property type="status" value="ALT_INIT"/>
    <property type="molecule type" value="mRNA"/>
</dbReference>
<dbReference type="EMBL" id="BC037870">
    <property type="protein sequence ID" value="AAH37870.1"/>
    <property type="molecule type" value="mRNA"/>
</dbReference>
<dbReference type="CCDS" id="CCDS53580.1">
    <molecule id="Q5SXH7-5"/>
</dbReference>
<dbReference type="CCDS" id="CCDS53581.1">
    <molecule id="Q5SXH7-3"/>
</dbReference>
<dbReference type="CCDS" id="CCDS7583.1">
    <molecule id="Q5SXH7-4"/>
</dbReference>
<dbReference type="CCDS" id="CCDS91351.1">
    <molecule id="Q5SXH7-6"/>
</dbReference>
<dbReference type="RefSeq" id="NP_001180363.1">
    <molecule id="Q5SXH7-3"/>
    <property type="nucleotide sequence ID" value="NM_001193434.2"/>
</dbReference>
<dbReference type="RefSeq" id="NP_001180364.1">
    <molecule id="Q5SXH7-3"/>
    <property type="nucleotide sequence ID" value="NM_001193435.2"/>
</dbReference>
<dbReference type="RefSeq" id="NP_001381997.1">
    <molecule id="Q5SXH7-6"/>
    <property type="nucleotide sequence ID" value="NM_001395068.1"/>
</dbReference>
<dbReference type="RefSeq" id="NP_079165.3">
    <molecule id="Q5SXH7-4"/>
    <property type="nucleotide sequence ID" value="NM_024889.4"/>
</dbReference>
<dbReference type="RefSeq" id="NP_872407.1">
    <molecule id="Q5SXH7-5"/>
    <property type="nucleotide sequence ID" value="NM_182601.2"/>
</dbReference>
<dbReference type="RefSeq" id="XP_005270219.1">
    <property type="nucleotide sequence ID" value="XM_005270162.2"/>
</dbReference>
<dbReference type="SMR" id="Q5SXH7"/>
<dbReference type="BioGRID" id="123020">
    <property type="interactions" value="7"/>
</dbReference>
<dbReference type="FunCoup" id="Q5SXH7">
    <property type="interactions" value="239"/>
</dbReference>
<dbReference type="IntAct" id="Q5SXH7">
    <property type="interactions" value="13"/>
</dbReference>
<dbReference type="STRING" id="9606.ENSP00000358316"/>
<dbReference type="iPTMnet" id="Q5SXH7"/>
<dbReference type="PhosphoSitePlus" id="Q5SXH7"/>
<dbReference type="BioMuta" id="PLEKHS1"/>
<dbReference type="DMDM" id="172045921"/>
<dbReference type="jPOST" id="Q5SXH7"/>
<dbReference type="MassIVE" id="Q5SXH7"/>
<dbReference type="PaxDb" id="9606-ENSP00000358316"/>
<dbReference type="PeptideAtlas" id="Q5SXH7"/>
<dbReference type="ProteomicsDB" id="63989">
    <molecule id="Q5SXH7-1"/>
</dbReference>
<dbReference type="ProteomicsDB" id="63990">
    <molecule id="Q5SXH7-2"/>
</dbReference>
<dbReference type="ProteomicsDB" id="63991">
    <molecule id="Q5SXH7-3"/>
</dbReference>
<dbReference type="ProteomicsDB" id="63992">
    <molecule id="Q5SXH7-4"/>
</dbReference>
<dbReference type="ProteomicsDB" id="63993">
    <molecule id="Q5SXH7-5"/>
</dbReference>
<dbReference type="Antibodypedia" id="31887">
    <property type="antibodies" value="67 antibodies from 12 providers"/>
</dbReference>
<dbReference type="DNASU" id="79949"/>
<dbReference type="Ensembl" id="ENST00000361048.6">
    <molecule id="Q5SXH7-4"/>
    <property type="protein sequence ID" value="ENSP00000354332.1"/>
    <property type="gene ID" value="ENSG00000148735.16"/>
</dbReference>
<dbReference type="Ensembl" id="ENST00000369310.7">
    <molecule id="Q5SXH7-5"/>
    <property type="protein sequence ID" value="ENSP00000358316.3"/>
    <property type="gene ID" value="ENSG00000148735.16"/>
</dbReference>
<dbReference type="Ensembl" id="ENST00000369312.9">
    <molecule id="Q5SXH7-3"/>
    <property type="protein sequence ID" value="ENSP00000358318.4"/>
    <property type="gene ID" value="ENSG00000148735.16"/>
</dbReference>
<dbReference type="Ensembl" id="ENST00000619563.5">
    <molecule id="Q5SXH7-3"/>
    <property type="protein sequence ID" value="ENSP00000483759.1"/>
    <property type="gene ID" value="ENSG00000148735.16"/>
</dbReference>
<dbReference type="Ensembl" id="ENST00000694986.1">
    <molecule id="Q5SXH7-6"/>
    <property type="protein sequence ID" value="ENSP00000511629.1"/>
    <property type="gene ID" value="ENSG00000148735.16"/>
</dbReference>
<dbReference type="GeneID" id="79949"/>
<dbReference type="KEGG" id="hsa:79949"/>
<dbReference type="MANE-Select" id="ENST00000694986.1">
    <molecule id="Q5SXH7-6"/>
    <property type="protein sequence ID" value="ENSP00000511629.1"/>
    <property type="RefSeq nucleotide sequence ID" value="NM_001395068.1"/>
    <property type="RefSeq protein sequence ID" value="NP_001381997.1"/>
</dbReference>
<dbReference type="UCSC" id="uc001lar.3">
    <molecule id="Q5SXH7-5"/>
    <property type="organism name" value="human"/>
</dbReference>
<dbReference type="AGR" id="HGNC:26285"/>
<dbReference type="CTD" id="79949"/>
<dbReference type="DisGeNET" id="79949"/>
<dbReference type="GeneCards" id="PLEKHS1"/>
<dbReference type="HGNC" id="HGNC:26285">
    <property type="gene designation" value="PLEKHS1"/>
</dbReference>
<dbReference type="HPA" id="ENSG00000148735">
    <property type="expression patterns" value="Group enriched (breast, cervix, intestine, pancreas, salivary gland)"/>
</dbReference>
<dbReference type="neXtProt" id="NX_Q5SXH7"/>
<dbReference type="OpenTargets" id="ENSG00000148735"/>
<dbReference type="PharmGKB" id="PA134886856"/>
<dbReference type="VEuPathDB" id="HostDB:ENSG00000148735"/>
<dbReference type="eggNOG" id="ENOG502RDEC">
    <property type="taxonomic scope" value="Eukaryota"/>
</dbReference>
<dbReference type="GeneTree" id="ENSGT00390000006729"/>
<dbReference type="HOGENOM" id="CLU_049125_1_0_1"/>
<dbReference type="InParanoid" id="Q5SXH7"/>
<dbReference type="OrthoDB" id="9900190at2759"/>
<dbReference type="PAN-GO" id="Q5SXH7">
    <property type="GO annotations" value="0 GO annotations based on evolutionary models"/>
</dbReference>
<dbReference type="PhylomeDB" id="Q5SXH7"/>
<dbReference type="TreeFam" id="TF334193"/>
<dbReference type="PathwayCommons" id="Q5SXH7"/>
<dbReference type="SignaLink" id="Q5SXH7"/>
<dbReference type="BioGRID-ORCS" id="79949">
    <property type="hits" value="7 hits in 1141 CRISPR screens"/>
</dbReference>
<dbReference type="ChiTaRS" id="PLEKHS1">
    <property type="organism name" value="human"/>
</dbReference>
<dbReference type="GenomeRNAi" id="79949"/>
<dbReference type="Pharos" id="Q5SXH7">
    <property type="development level" value="Tbio"/>
</dbReference>
<dbReference type="PRO" id="PR:Q5SXH7"/>
<dbReference type="Proteomes" id="UP000005640">
    <property type="component" value="Chromosome 10"/>
</dbReference>
<dbReference type="RNAct" id="Q5SXH7">
    <property type="molecule type" value="protein"/>
</dbReference>
<dbReference type="Bgee" id="ENSG00000148735">
    <property type="expression patterns" value="Expressed in olfactory segment of nasal mucosa and 114 other cell types or tissues"/>
</dbReference>
<dbReference type="ExpressionAtlas" id="Q5SXH7">
    <property type="expression patterns" value="baseline and differential"/>
</dbReference>
<dbReference type="Gene3D" id="2.30.29.30">
    <property type="entry name" value="Pleckstrin-homology domain (PH domain)/Phosphotyrosine-binding domain (PTB)"/>
    <property type="match status" value="1"/>
</dbReference>
<dbReference type="InterPro" id="IPR011993">
    <property type="entry name" value="PH-like_dom_sf"/>
</dbReference>
<dbReference type="InterPro" id="IPR001849">
    <property type="entry name" value="PH_domain"/>
</dbReference>
<dbReference type="InterPro" id="IPR042986">
    <property type="entry name" value="PLEKHS1"/>
</dbReference>
<dbReference type="PANTHER" id="PTHR47014">
    <property type="entry name" value="PLECKSTRIN HOMOLOGY DOMAIN-CONTAINING FAMILY S MEMBER 1"/>
    <property type="match status" value="1"/>
</dbReference>
<dbReference type="PANTHER" id="PTHR47014:SF1">
    <property type="entry name" value="PLECKSTRIN HOMOLOGY DOMAIN-CONTAINING FAMILY S MEMBER 1"/>
    <property type="match status" value="1"/>
</dbReference>
<dbReference type="Pfam" id="PF00169">
    <property type="entry name" value="PH"/>
    <property type="match status" value="1"/>
</dbReference>
<dbReference type="SMART" id="SM00233">
    <property type="entry name" value="PH"/>
    <property type="match status" value="1"/>
</dbReference>
<dbReference type="SUPFAM" id="SSF50729">
    <property type="entry name" value="PH domain-like"/>
    <property type="match status" value="1"/>
</dbReference>
<dbReference type="PROSITE" id="PS50003">
    <property type="entry name" value="PH_DOMAIN"/>
    <property type="match status" value="1"/>
</dbReference>
<reference key="1">
    <citation type="submission" date="2008-09" db="EMBL/GenBank/DDBJ databases">
        <authorList>
            <person name="Li J."/>
            <person name="Wang H."/>
        </authorList>
    </citation>
    <scope>NUCLEOTIDE SEQUENCE [MRNA] (ISOFORM 5)</scope>
</reference>
<reference key="2">
    <citation type="journal article" date="2004" name="Nat. Genet.">
        <title>Complete sequencing and characterization of 21,243 full-length human cDNAs.</title>
        <authorList>
            <person name="Ota T."/>
            <person name="Suzuki Y."/>
            <person name="Nishikawa T."/>
            <person name="Otsuki T."/>
            <person name="Sugiyama T."/>
            <person name="Irie R."/>
            <person name="Wakamatsu A."/>
            <person name="Hayashi K."/>
            <person name="Sato H."/>
            <person name="Nagai K."/>
            <person name="Kimura K."/>
            <person name="Makita H."/>
            <person name="Sekine M."/>
            <person name="Obayashi M."/>
            <person name="Nishi T."/>
            <person name="Shibahara T."/>
            <person name="Tanaka T."/>
            <person name="Ishii S."/>
            <person name="Yamamoto J."/>
            <person name="Saito K."/>
            <person name="Kawai Y."/>
            <person name="Isono Y."/>
            <person name="Nakamura Y."/>
            <person name="Nagahari K."/>
            <person name="Murakami K."/>
            <person name="Yasuda T."/>
            <person name="Iwayanagi T."/>
            <person name="Wagatsuma M."/>
            <person name="Shiratori A."/>
            <person name="Sudo H."/>
            <person name="Hosoiri T."/>
            <person name="Kaku Y."/>
            <person name="Kodaira H."/>
            <person name="Kondo H."/>
            <person name="Sugawara M."/>
            <person name="Takahashi M."/>
            <person name="Kanda K."/>
            <person name="Yokoi T."/>
            <person name="Furuya T."/>
            <person name="Kikkawa E."/>
            <person name="Omura Y."/>
            <person name="Abe K."/>
            <person name="Kamihara K."/>
            <person name="Katsuta N."/>
            <person name="Sato K."/>
            <person name="Tanikawa M."/>
            <person name="Yamazaki M."/>
            <person name="Ninomiya K."/>
            <person name="Ishibashi T."/>
            <person name="Yamashita H."/>
            <person name="Murakawa K."/>
            <person name="Fujimori K."/>
            <person name="Tanai H."/>
            <person name="Kimata M."/>
            <person name="Watanabe M."/>
            <person name="Hiraoka S."/>
            <person name="Chiba Y."/>
            <person name="Ishida S."/>
            <person name="Ono Y."/>
            <person name="Takiguchi S."/>
            <person name="Watanabe S."/>
            <person name="Yosida M."/>
            <person name="Hotuta T."/>
            <person name="Kusano J."/>
            <person name="Kanehori K."/>
            <person name="Takahashi-Fujii A."/>
            <person name="Hara H."/>
            <person name="Tanase T.-O."/>
            <person name="Nomura Y."/>
            <person name="Togiya S."/>
            <person name="Komai F."/>
            <person name="Hara R."/>
            <person name="Takeuchi K."/>
            <person name="Arita M."/>
            <person name="Imose N."/>
            <person name="Musashino K."/>
            <person name="Yuuki H."/>
            <person name="Oshima A."/>
            <person name="Sasaki N."/>
            <person name="Aotsuka S."/>
            <person name="Yoshikawa Y."/>
            <person name="Matsunawa H."/>
            <person name="Ichihara T."/>
            <person name="Shiohata N."/>
            <person name="Sano S."/>
            <person name="Moriya S."/>
            <person name="Momiyama H."/>
            <person name="Satoh N."/>
            <person name="Takami S."/>
            <person name="Terashima Y."/>
            <person name="Suzuki O."/>
            <person name="Nakagawa S."/>
            <person name="Senoh A."/>
            <person name="Mizoguchi H."/>
            <person name="Goto Y."/>
            <person name="Shimizu F."/>
            <person name="Wakebe H."/>
            <person name="Hishigaki H."/>
            <person name="Watanabe T."/>
            <person name="Sugiyama A."/>
            <person name="Takemoto M."/>
            <person name="Kawakami B."/>
            <person name="Yamazaki M."/>
            <person name="Watanabe K."/>
            <person name="Kumagai A."/>
            <person name="Itakura S."/>
            <person name="Fukuzumi Y."/>
            <person name="Fujimori Y."/>
            <person name="Komiyama M."/>
            <person name="Tashiro H."/>
            <person name="Tanigami A."/>
            <person name="Fujiwara T."/>
            <person name="Ono T."/>
            <person name="Yamada K."/>
            <person name="Fujii Y."/>
            <person name="Ozaki K."/>
            <person name="Hirao M."/>
            <person name="Ohmori Y."/>
            <person name="Kawabata A."/>
            <person name="Hikiji T."/>
            <person name="Kobatake N."/>
            <person name="Inagaki H."/>
            <person name="Ikema Y."/>
            <person name="Okamoto S."/>
            <person name="Okitani R."/>
            <person name="Kawakami T."/>
            <person name="Noguchi S."/>
            <person name="Itoh T."/>
            <person name="Shigeta K."/>
            <person name="Senba T."/>
            <person name="Matsumura K."/>
            <person name="Nakajima Y."/>
            <person name="Mizuno T."/>
            <person name="Morinaga M."/>
            <person name="Sasaki M."/>
            <person name="Togashi T."/>
            <person name="Oyama M."/>
            <person name="Hata H."/>
            <person name="Watanabe M."/>
            <person name="Komatsu T."/>
            <person name="Mizushima-Sugano J."/>
            <person name="Satoh T."/>
            <person name="Shirai Y."/>
            <person name="Takahashi Y."/>
            <person name="Nakagawa K."/>
            <person name="Okumura K."/>
            <person name="Nagase T."/>
            <person name="Nomura N."/>
            <person name="Kikuchi H."/>
            <person name="Masuho Y."/>
            <person name="Yamashita R."/>
            <person name="Nakai K."/>
            <person name="Yada T."/>
            <person name="Nakamura Y."/>
            <person name="Ohara O."/>
            <person name="Isogai T."/>
            <person name="Sugano S."/>
        </authorList>
    </citation>
    <scope>NUCLEOTIDE SEQUENCE [LARGE SCALE MRNA] (ISOFORMS 3 AND 4)</scope>
    <scope>NUCLEOTIDE SEQUENCE [LARGE SCALE MRNA] OF 199-465 (ISOFORM 2)</scope>
    <source>
        <tissue>Lung</tissue>
        <tissue>Small intestine</tissue>
        <tissue>Trachea</tissue>
    </source>
</reference>
<reference key="3">
    <citation type="journal article" date="2004" name="Nature">
        <title>The DNA sequence and comparative analysis of human chromosome 10.</title>
        <authorList>
            <person name="Deloukas P."/>
            <person name="Earthrowl M.E."/>
            <person name="Grafham D.V."/>
            <person name="Rubenfield M."/>
            <person name="French L."/>
            <person name="Steward C.A."/>
            <person name="Sims S.K."/>
            <person name="Jones M.C."/>
            <person name="Searle S."/>
            <person name="Scott C."/>
            <person name="Howe K."/>
            <person name="Hunt S.E."/>
            <person name="Andrews T.D."/>
            <person name="Gilbert J.G.R."/>
            <person name="Swarbreck D."/>
            <person name="Ashurst J.L."/>
            <person name="Taylor A."/>
            <person name="Battles J."/>
            <person name="Bird C.P."/>
            <person name="Ainscough R."/>
            <person name="Almeida J.P."/>
            <person name="Ashwell R.I.S."/>
            <person name="Ambrose K.D."/>
            <person name="Babbage A.K."/>
            <person name="Bagguley C.L."/>
            <person name="Bailey J."/>
            <person name="Banerjee R."/>
            <person name="Bates K."/>
            <person name="Beasley H."/>
            <person name="Bray-Allen S."/>
            <person name="Brown A.J."/>
            <person name="Brown J.Y."/>
            <person name="Burford D.C."/>
            <person name="Burrill W."/>
            <person name="Burton J."/>
            <person name="Cahill P."/>
            <person name="Camire D."/>
            <person name="Carter N.P."/>
            <person name="Chapman J.C."/>
            <person name="Clark S.Y."/>
            <person name="Clarke G."/>
            <person name="Clee C.M."/>
            <person name="Clegg S."/>
            <person name="Corby N."/>
            <person name="Coulson A."/>
            <person name="Dhami P."/>
            <person name="Dutta I."/>
            <person name="Dunn M."/>
            <person name="Faulkner L."/>
            <person name="Frankish A."/>
            <person name="Frankland J.A."/>
            <person name="Garner P."/>
            <person name="Garnett J."/>
            <person name="Gribble S."/>
            <person name="Griffiths C."/>
            <person name="Grocock R."/>
            <person name="Gustafson E."/>
            <person name="Hammond S."/>
            <person name="Harley J.L."/>
            <person name="Hart E."/>
            <person name="Heath P.D."/>
            <person name="Ho T.P."/>
            <person name="Hopkins B."/>
            <person name="Horne J."/>
            <person name="Howden P.J."/>
            <person name="Huckle E."/>
            <person name="Hynds C."/>
            <person name="Johnson C."/>
            <person name="Johnson D."/>
            <person name="Kana A."/>
            <person name="Kay M."/>
            <person name="Kimberley A.M."/>
            <person name="Kershaw J.K."/>
            <person name="Kokkinaki M."/>
            <person name="Laird G.K."/>
            <person name="Lawlor S."/>
            <person name="Lee H.M."/>
            <person name="Leongamornlert D.A."/>
            <person name="Laird G."/>
            <person name="Lloyd C."/>
            <person name="Lloyd D.M."/>
            <person name="Loveland J."/>
            <person name="Lovell J."/>
            <person name="McLaren S."/>
            <person name="McLay K.E."/>
            <person name="McMurray A."/>
            <person name="Mashreghi-Mohammadi M."/>
            <person name="Matthews L."/>
            <person name="Milne S."/>
            <person name="Nickerson T."/>
            <person name="Nguyen M."/>
            <person name="Overton-Larty E."/>
            <person name="Palmer S.A."/>
            <person name="Pearce A.V."/>
            <person name="Peck A.I."/>
            <person name="Pelan S."/>
            <person name="Phillimore B."/>
            <person name="Porter K."/>
            <person name="Rice C.M."/>
            <person name="Rogosin A."/>
            <person name="Ross M.T."/>
            <person name="Sarafidou T."/>
            <person name="Sehra H.K."/>
            <person name="Shownkeen R."/>
            <person name="Skuce C.D."/>
            <person name="Smith M."/>
            <person name="Standring L."/>
            <person name="Sycamore N."/>
            <person name="Tester J."/>
            <person name="Thorpe A."/>
            <person name="Torcasso W."/>
            <person name="Tracey A."/>
            <person name="Tromans A."/>
            <person name="Tsolas J."/>
            <person name="Wall M."/>
            <person name="Walsh J."/>
            <person name="Wang H."/>
            <person name="Weinstock K."/>
            <person name="West A.P."/>
            <person name="Willey D.L."/>
            <person name="Whitehead S.L."/>
            <person name="Wilming L."/>
            <person name="Wray P.W."/>
            <person name="Young L."/>
            <person name="Chen Y."/>
            <person name="Lovering R.C."/>
            <person name="Moschonas N.K."/>
            <person name="Siebert R."/>
            <person name="Fechtel K."/>
            <person name="Bentley D."/>
            <person name="Durbin R.M."/>
            <person name="Hubbard T."/>
            <person name="Doucette-Stamm L."/>
            <person name="Beck S."/>
            <person name="Smith D.R."/>
            <person name="Rogers J."/>
        </authorList>
    </citation>
    <scope>NUCLEOTIDE SEQUENCE [LARGE SCALE GENOMIC DNA]</scope>
</reference>
<reference key="4">
    <citation type="journal article" date="2004" name="Genome Res.">
        <title>The status, quality, and expansion of the NIH full-length cDNA project: the Mammalian Gene Collection (MGC).</title>
        <authorList>
            <consortium name="The MGC Project Team"/>
        </authorList>
    </citation>
    <scope>NUCLEOTIDE SEQUENCE [LARGE SCALE MRNA] (ISOFORM 5)</scope>
    <scope>NUCLEOTIDE SEQUENCE [LARGE SCALE MRNA] OF 179-465 (ISOFORM 1)</scope>
    <source>
        <tissue>Testis</tissue>
    </source>
</reference>
<gene>
    <name evidence="4" type="primary">PLEKHS1</name>
    <name type="synonym">C10orf81</name>
</gene>